<comment type="function">
    <text evidence="1">Transferase that catalyzes the transfer of sulfur from thiosulfate to thiophilic acceptors such as cyanide or dithiols. May function in a CysM-independent thiosulfate assimilation pathway by catalyzing the conversion of thiosulfate to sulfite, which can then be used for L-cysteine biosynthesis.</text>
</comment>
<comment type="catalytic activity">
    <reaction evidence="1">
        <text>thiosulfate + hydrogen cyanide = thiocyanate + sulfite + 2 H(+)</text>
        <dbReference type="Rhea" id="RHEA:16881"/>
        <dbReference type="ChEBI" id="CHEBI:15378"/>
        <dbReference type="ChEBI" id="CHEBI:17359"/>
        <dbReference type="ChEBI" id="CHEBI:18022"/>
        <dbReference type="ChEBI" id="CHEBI:18407"/>
        <dbReference type="ChEBI" id="CHEBI:33542"/>
        <dbReference type="EC" id="2.8.1.1"/>
    </reaction>
</comment>
<comment type="catalytic activity">
    <reaction evidence="1">
        <text>thiosulfate + [thioredoxin]-dithiol = [thioredoxin]-disulfide + hydrogen sulfide + sulfite + 2 H(+)</text>
        <dbReference type="Rhea" id="RHEA:83859"/>
        <dbReference type="Rhea" id="RHEA-COMP:10698"/>
        <dbReference type="Rhea" id="RHEA-COMP:10700"/>
        <dbReference type="ChEBI" id="CHEBI:15378"/>
        <dbReference type="ChEBI" id="CHEBI:17359"/>
        <dbReference type="ChEBI" id="CHEBI:29919"/>
        <dbReference type="ChEBI" id="CHEBI:29950"/>
        <dbReference type="ChEBI" id="CHEBI:33542"/>
        <dbReference type="ChEBI" id="CHEBI:50058"/>
    </reaction>
</comment>
<comment type="subcellular location">
    <subcellularLocation>
        <location evidence="1">Cytoplasm</location>
    </subcellularLocation>
</comment>
<comment type="similarity">
    <text evidence="1">Belongs to the GlpE family.</text>
</comment>
<accession>Q4QMN7</accession>
<proteinExistence type="inferred from homology"/>
<feature type="chain" id="PRO_1000062961" description="Thiosulfate sulfurtransferase GlpE">
    <location>
        <begin position="1"/>
        <end position="105"/>
    </location>
</feature>
<feature type="domain" description="Rhodanese" evidence="1">
    <location>
        <begin position="15"/>
        <end position="103"/>
    </location>
</feature>
<feature type="active site" description="Cysteine persulfide intermediate" evidence="1">
    <location>
        <position position="63"/>
    </location>
</feature>
<evidence type="ECO:0000255" key="1">
    <source>
        <dbReference type="HAMAP-Rule" id="MF_01009"/>
    </source>
</evidence>
<keyword id="KW-0963">Cytoplasm</keyword>
<keyword id="KW-0808">Transferase</keyword>
<dbReference type="EC" id="2.8.1.1" evidence="1"/>
<dbReference type="EMBL" id="CP000057">
    <property type="protein sequence ID" value="AAX87710.1"/>
    <property type="molecule type" value="Genomic_DNA"/>
</dbReference>
<dbReference type="RefSeq" id="WP_005658417.1">
    <property type="nucleotide sequence ID" value="NC_007146.2"/>
</dbReference>
<dbReference type="SMR" id="Q4QMN7"/>
<dbReference type="GeneID" id="93219678"/>
<dbReference type="KEGG" id="hit:NTHI0801"/>
<dbReference type="HOGENOM" id="CLU_089574_14_0_6"/>
<dbReference type="Proteomes" id="UP000002525">
    <property type="component" value="Chromosome"/>
</dbReference>
<dbReference type="GO" id="GO:0005737">
    <property type="term" value="C:cytoplasm"/>
    <property type="evidence" value="ECO:0007669"/>
    <property type="project" value="UniProtKB-SubCell"/>
</dbReference>
<dbReference type="GO" id="GO:0004792">
    <property type="term" value="F:thiosulfate-cyanide sulfurtransferase activity"/>
    <property type="evidence" value="ECO:0007669"/>
    <property type="project" value="UniProtKB-UniRule"/>
</dbReference>
<dbReference type="GO" id="GO:0006071">
    <property type="term" value="P:glycerol metabolic process"/>
    <property type="evidence" value="ECO:0007669"/>
    <property type="project" value="UniProtKB-UniRule"/>
</dbReference>
<dbReference type="CDD" id="cd01444">
    <property type="entry name" value="GlpE_ST"/>
    <property type="match status" value="1"/>
</dbReference>
<dbReference type="Gene3D" id="3.40.250.10">
    <property type="entry name" value="Rhodanese-like domain"/>
    <property type="match status" value="1"/>
</dbReference>
<dbReference type="HAMAP" id="MF_01009">
    <property type="entry name" value="Thiosulf_sulfurtr"/>
    <property type="match status" value="1"/>
</dbReference>
<dbReference type="InterPro" id="IPR050229">
    <property type="entry name" value="GlpE_sulfurtransferase"/>
</dbReference>
<dbReference type="InterPro" id="IPR001763">
    <property type="entry name" value="Rhodanese-like_dom"/>
</dbReference>
<dbReference type="InterPro" id="IPR036873">
    <property type="entry name" value="Rhodanese-like_dom_sf"/>
</dbReference>
<dbReference type="InterPro" id="IPR023695">
    <property type="entry name" value="Thiosulf_sulfurTrfase"/>
</dbReference>
<dbReference type="NCBIfam" id="NF001195">
    <property type="entry name" value="PRK00162.1"/>
    <property type="match status" value="1"/>
</dbReference>
<dbReference type="PANTHER" id="PTHR43031">
    <property type="entry name" value="FAD-DEPENDENT OXIDOREDUCTASE"/>
    <property type="match status" value="1"/>
</dbReference>
<dbReference type="PANTHER" id="PTHR43031:SF6">
    <property type="entry name" value="THIOSULFATE SULFURTRANSFERASE GLPE"/>
    <property type="match status" value="1"/>
</dbReference>
<dbReference type="Pfam" id="PF00581">
    <property type="entry name" value="Rhodanese"/>
    <property type="match status" value="1"/>
</dbReference>
<dbReference type="SMART" id="SM00450">
    <property type="entry name" value="RHOD"/>
    <property type="match status" value="1"/>
</dbReference>
<dbReference type="SUPFAM" id="SSF52821">
    <property type="entry name" value="Rhodanese/Cell cycle control phosphatase"/>
    <property type="match status" value="1"/>
</dbReference>
<dbReference type="PROSITE" id="PS50206">
    <property type="entry name" value="RHODANESE_3"/>
    <property type="match status" value="1"/>
</dbReference>
<gene>
    <name evidence="1" type="primary">glpE</name>
    <name type="ordered locus">NTHI0801</name>
</gene>
<reference key="1">
    <citation type="journal article" date="2005" name="J. Bacteriol.">
        <title>Genomic sequence of an otitis media isolate of nontypeable Haemophilus influenzae: comparative study with H. influenzae serotype d, strain KW20.</title>
        <authorList>
            <person name="Harrison A."/>
            <person name="Dyer D.W."/>
            <person name="Gillaspy A."/>
            <person name="Ray W.C."/>
            <person name="Mungur R."/>
            <person name="Carson M.B."/>
            <person name="Zhong H."/>
            <person name="Gipson J."/>
            <person name="Gipson M."/>
            <person name="Johnson L.S."/>
            <person name="Lewis L."/>
            <person name="Bakaletz L.O."/>
            <person name="Munson R.S. Jr."/>
        </authorList>
    </citation>
    <scope>NUCLEOTIDE SEQUENCE [LARGE SCALE GENOMIC DNA]</scope>
    <source>
        <strain>86-028NP</strain>
    </source>
</reference>
<organism>
    <name type="scientific">Haemophilus influenzae (strain 86-028NP)</name>
    <dbReference type="NCBI Taxonomy" id="281310"/>
    <lineage>
        <taxon>Bacteria</taxon>
        <taxon>Pseudomonadati</taxon>
        <taxon>Pseudomonadota</taxon>
        <taxon>Gammaproteobacteria</taxon>
        <taxon>Pasteurellales</taxon>
        <taxon>Pasteurellaceae</taxon>
        <taxon>Haemophilus</taxon>
    </lineage>
</organism>
<protein>
    <recommendedName>
        <fullName evidence="1">Thiosulfate sulfurtransferase GlpE</fullName>
        <ecNumber evidence="1">2.8.1.1</ecNumber>
    </recommendedName>
</protein>
<sequence length="105" mass="12023">MSFKEITPQQAWEMMQQGAILVDIRDNMRFAYSHPKGAFHLTNQSFLQFEELADFDSPIIVSCYHGVSSRNVATFLVEQGYKNVFSMIGGFDGWCRAELPIDTTY</sequence>
<name>GLPE_HAEI8</name>